<evidence type="ECO:0000255" key="1">
    <source>
        <dbReference type="HAMAP-Rule" id="MF_00688"/>
    </source>
</evidence>
<sequence length="234" mass="26643">MRLVQLSRHSIAFPSPEGALREPNGLLALGGDLSPARLLMAYQHGIFPWFSPGDPILWWSPDPRAVLWPEKFHLSRSMKRFHNASPYRVTLNYAFDRVIDGCANHRDEGTWITRGIEEAYRRLHELGHAHSIEVWRDQELVGGMYGVSQGALFCGESMFSRQENASKTALLVFCAEFIRHGGKLIDCQVLNSHTASLGAIEIPRRDYLDHLAGLRQQPLASRFWVPRTLFLPRK</sequence>
<organism>
    <name type="scientific">Salmonella paratyphi A (strain ATCC 9150 / SARB42)</name>
    <dbReference type="NCBI Taxonomy" id="295319"/>
    <lineage>
        <taxon>Bacteria</taxon>
        <taxon>Pseudomonadati</taxon>
        <taxon>Pseudomonadota</taxon>
        <taxon>Gammaproteobacteria</taxon>
        <taxon>Enterobacterales</taxon>
        <taxon>Enterobacteriaceae</taxon>
        <taxon>Salmonella</taxon>
    </lineage>
</organism>
<gene>
    <name evidence="1" type="primary">aat</name>
    <name type="ordered locus">SPA1843</name>
</gene>
<accession>Q5PGJ6</accession>
<name>LFTR_SALPA</name>
<proteinExistence type="inferred from homology"/>
<keyword id="KW-0012">Acyltransferase</keyword>
<keyword id="KW-0963">Cytoplasm</keyword>
<keyword id="KW-0808">Transferase</keyword>
<dbReference type="EC" id="2.3.2.6" evidence="1"/>
<dbReference type="EMBL" id="CP000026">
    <property type="protein sequence ID" value="AAV77756.1"/>
    <property type="molecule type" value="Genomic_DNA"/>
</dbReference>
<dbReference type="RefSeq" id="WP_001241641.1">
    <property type="nucleotide sequence ID" value="NC_006511.1"/>
</dbReference>
<dbReference type="SMR" id="Q5PGJ6"/>
<dbReference type="KEGG" id="spt:SPA1843"/>
<dbReference type="HOGENOM" id="CLU_075045_0_0_6"/>
<dbReference type="Proteomes" id="UP000008185">
    <property type="component" value="Chromosome"/>
</dbReference>
<dbReference type="GO" id="GO:0005737">
    <property type="term" value="C:cytoplasm"/>
    <property type="evidence" value="ECO:0007669"/>
    <property type="project" value="UniProtKB-SubCell"/>
</dbReference>
<dbReference type="GO" id="GO:0008914">
    <property type="term" value="F:leucyl-tRNA--protein transferase activity"/>
    <property type="evidence" value="ECO:0007669"/>
    <property type="project" value="UniProtKB-UniRule"/>
</dbReference>
<dbReference type="GO" id="GO:0030163">
    <property type="term" value="P:protein catabolic process"/>
    <property type="evidence" value="ECO:0007669"/>
    <property type="project" value="UniProtKB-UniRule"/>
</dbReference>
<dbReference type="FunFam" id="3.30.70.3550:FF:000001">
    <property type="entry name" value="Leucyl/phenylalanyl-tRNA--protein transferase"/>
    <property type="match status" value="1"/>
</dbReference>
<dbReference type="FunFam" id="3.40.630.70:FF:000001">
    <property type="entry name" value="Leucyl/phenylalanyl-tRNA--protein transferase"/>
    <property type="match status" value="1"/>
</dbReference>
<dbReference type="Gene3D" id="3.40.630.70">
    <property type="entry name" value="Leucyl/phenylalanyl-tRNA-protein transferase, C-terminal domain"/>
    <property type="match status" value="1"/>
</dbReference>
<dbReference type="Gene3D" id="3.30.70.3550">
    <property type="entry name" value="Leucyl/phenylalanyl-tRNA-protein transferase, N-terminal domain"/>
    <property type="match status" value="1"/>
</dbReference>
<dbReference type="HAMAP" id="MF_00688">
    <property type="entry name" value="Leu_Phe_trans"/>
    <property type="match status" value="1"/>
</dbReference>
<dbReference type="InterPro" id="IPR016181">
    <property type="entry name" value="Acyl_CoA_acyltransferase"/>
</dbReference>
<dbReference type="InterPro" id="IPR004616">
    <property type="entry name" value="Leu/Phe-tRNA_Trfase"/>
</dbReference>
<dbReference type="InterPro" id="IPR042203">
    <property type="entry name" value="Leu/Phe-tRNA_Trfase_C"/>
</dbReference>
<dbReference type="InterPro" id="IPR042221">
    <property type="entry name" value="Leu/Phe-tRNA_Trfase_N"/>
</dbReference>
<dbReference type="NCBIfam" id="TIGR00667">
    <property type="entry name" value="aat"/>
    <property type="match status" value="1"/>
</dbReference>
<dbReference type="PANTHER" id="PTHR30098">
    <property type="entry name" value="LEUCYL/PHENYLALANYL-TRNA--PROTEIN TRANSFERASE"/>
    <property type="match status" value="1"/>
</dbReference>
<dbReference type="PANTHER" id="PTHR30098:SF2">
    <property type="entry name" value="LEUCYL_PHENYLALANYL-TRNA--PROTEIN TRANSFERASE"/>
    <property type="match status" value="1"/>
</dbReference>
<dbReference type="Pfam" id="PF03588">
    <property type="entry name" value="Leu_Phe_trans"/>
    <property type="match status" value="1"/>
</dbReference>
<dbReference type="SUPFAM" id="SSF55729">
    <property type="entry name" value="Acyl-CoA N-acyltransferases (Nat)"/>
    <property type="match status" value="1"/>
</dbReference>
<protein>
    <recommendedName>
        <fullName evidence="1">Leucyl/phenylalanyl-tRNA--protein transferase</fullName>
        <ecNumber evidence="1">2.3.2.6</ecNumber>
    </recommendedName>
    <alternativeName>
        <fullName evidence="1">L/F-transferase</fullName>
    </alternativeName>
    <alternativeName>
        <fullName evidence="1">Leucyltransferase</fullName>
    </alternativeName>
    <alternativeName>
        <fullName evidence="1">Phenyalanyltransferase</fullName>
    </alternativeName>
</protein>
<reference key="1">
    <citation type="journal article" date="2004" name="Nat. Genet.">
        <title>Comparison of genome degradation in Paratyphi A and Typhi, human-restricted serovars of Salmonella enterica that cause typhoid.</title>
        <authorList>
            <person name="McClelland M."/>
            <person name="Sanderson K.E."/>
            <person name="Clifton S.W."/>
            <person name="Latreille P."/>
            <person name="Porwollik S."/>
            <person name="Sabo A."/>
            <person name="Meyer R."/>
            <person name="Bieri T."/>
            <person name="Ozersky P."/>
            <person name="McLellan M."/>
            <person name="Harkins C.R."/>
            <person name="Wang C."/>
            <person name="Nguyen C."/>
            <person name="Berghoff A."/>
            <person name="Elliott G."/>
            <person name="Kohlberg S."/>
            <person name="Strong C."/>
            <person name="Du F."/>
            <person name="Carter J."/>
            <person name="Kremizki C."/>
            <person name="Layman D."/>
            <person name="Leonard S."/>
            <person name="Sun H."/>
            <person name="Fulton L."/>
            <person name="Nash W."/>
            <person name="Miner T."/>
            <person name="Minx P."/>
            <person name="Delehaunty K."/>
            <person name="Fronick C."/>
            <person name="Magrini V."/>
            <person name="Nhan M."/>
            <person name="Warren W."/>
            <person name="Florea L."/>
            <person name="Spieth J."/>
            <person name="Wilson R.K."/>
        </authorList>
    </citation>
    <scope>NUCLEOTIDE SEQUENCE [LARGE SCALE GENOMIC DNA]</scope>
    <source>
        <strain>ATCC 9150 / SARB42</strain>
    </source>
</reference>
<feature type="chain" id="PRO_0000258097" description="Leucyl/phenylalanyl-tRNA--protein transferase">
    <location>
        <begin position="1"/>
        <end position="234"/>
    </location>
</feature>
<comment type="function">
    <text evidence="1">Functions in the N-end rule pathway of protein degradation where it conjugates Leu, Phe and, less efficiently, Met from aminoacyl-tRNAs to the N-termini of proteins containing an N-terminal arginine or lysine.</text>
</comment>
<comment type="catalytic activity">
    <reaction evidence="1">
        <text>N-terminal L-lysyl-[protein] + L-leucyl-tRNA(Leu) = N-terminal L-leucyl-L-lysyl-[protein] + tRNA(Leu) + H(+)</text>
        <dbReference type="Rhea" id="RHEA:12340"/>
        <dbReference type="Rhea" id="RHEA-COMP:9613"/>
        <dbReference type="Rhea" id="RHEA-COMP:9622"/>
        <dbReference type="Rhea" id="RHEA-COMP:12670"/>
        <dbReference type="Rhea" id="RHEA-COMP:12671"/>
        <dbReference type="ChEBI" id="CHEBI:15378"/>
        <dbReference type="ChEBI" id="CHEBI:65249"/>
        <dbReference type="ChEBI" id="CHEBI:78442"/>
        <dbReference type="ChEBI" id="CHEBI:78494"/>
        <dbReference type="ChEBI" id="CHEBI:133043"/>
        <dbReference type="EC" id="2.3.2.6"/>
    </reaction>
</comment>
<comment type="catalytic activity">
    <reaction evidence="1">
        <text>N-terminal L-arginyl-[protein] + L-leucyl-tRNA(Leu) = N-terminal L-leucyl-L-arginyl-[protein] + tRNA(Leu) + H(+)</text>
        <dbReference type="Rhea" id="RHEA:50416"/>
        <dbReference type="Rhea" id="RHEA-COMP:9613"/>
        <dbReference type="Rhea" id="RHEA-COMP:9622"/>
        <dbReference type="Rhea" id="RHEA-COMP:12672"/>
        <dbReference type="Rhea" id="RHEA-COMP:12673"/>
        <dbReference type="ChEBI" id="CHEBI:15378"/>
        <dbReference type="ChEBI" id="CHEBI:64719"/>
        <dbReference type="ChEBI" id="CHEBI:78442"/>
        <dbReference type="ChEBI" id="CHEBI:78494"/>
        <dbReference type="ChEBI" id="CHEBI:133044"/>
        <dbReference type="EC" id="2.3.2.6"/>
    </reaction>
</comment>
<comment type="catalytic activity">
    <reaction evidence="1">
        <text>L-phenylalanyl-tRNA(Phe) + an N-terminal L-alpha-aminoacyl-[protein] = an N-terminal L-phenylalanyl-L-alpha-aminoacyl-[protein] + tRNA(Phe)</text>
        <dbReference type="Rhea" id="RHEA:43632"/>
        <dbReference type="Rhea" id="RHEA-COMP:9668"/>
        <dbReference type="Rhea" id="RHEA-COMP:9699"/>
        <dbReference type="Rhea" id="RHEA-COMP:10636"/>
        <dbReference type="Rhea" id="RHEA-COMP:10637"/>
        <dbReference type="ChEBI" id="CHEBI:78442"/>
        <dbReference type="ChEBI" id="CHEBI:78531"/>
        <dbReference type="ChEBI" id="CHEBI:78597"/>
        <dbReference type="ChEBI" id="CHEBI:83561"/>
        <dbReference type="EC" id="2.3.2.6"/>
    </reaction>
</comment>
<comment type="subcellular location">
    <subcellularLocation>
        <location evidence="1">Cytoplasm</location>
    </subcellularLocation>
</comment>
<comment type="similarity">
    <text evidence="1">Belongs to the L/F-transferase family.</text>
</comment>